<dbReference type="EMBL" id="CP000880">
    <property type="protein sequence ID" value="ABX21022.1"/>
    <property type="molecule type" value="Genomic_DNA"/>
</dbReference>
<dbReference type="SMR" id="A9MNJ9"/>
<dbReference type="STRING" id="41514.SARI_01116"/>
<dbReference type="KEGG" id="ses:SARI_01116"/>
<dbReference type="HOGENOM" id="CLU_185263_0_0_6"/>
<dbReference type="Proteomes" id="UP000002084">
    <property type="component" value="Chromosome"/>
</dbReference>
<dbReference type="HAMAP" id="MF_00507">
    <property type="entry name" value="UPF0181"/>
    <property type="match status" value="1"/>
</dbReference>
<dbReference type="InterPro" id="IPR005371">
    <property type="entry name" value="UPF0181"/>
</dbReference>
<dbReference type="NCBIfam" id="NF003476">
    <property type="entry name" value="PRK05114.1"/>
    <property type="match status" value="1"/>
</dbReference>
<dbReference type="Pfam" id="PF03701">
    <property type="entry name" value="UPF0181"/>
    <property type="match status" value="1"/>
</dbReference>
<evidence type="ECO:0000255" key="1">
    <source>
        <dbReference type="HAMAP-Rule" id="MF_00507"/>
    </source>
</evidence>
<sequence>MFAGLPSLSHEQQQKAVERIQELMSQGMSSGEAIAQVAGELRANHTGERIVARFEDEDE</sequence>
<reference key="1">
    <citation type="submission" date="2007-11" db="EMBL/GenBank/DDBJ databases">
        <authorList>
            <consortium name="The Salmonella enterica serovar Arizonae Genome Sequencing Project"/>
            <person name="McClelland M."/>
            <person name="Sanderson E.K."/>
            <person name="Porwollik S."/>
            <person name="Spieth J."/>
            <person name="Clifton W.S."/>
            <person name="Fulton R."/>
            <person name="Chunyan W."/>
            <person name="Wollam A."/>
            <person name="Shah N."/>
            <person name="Pepin K."/>
            <person name="Bhonagiri V."/>
            <person name="Nash W."/>
            <person name="Johnson M."/>
            <person name="Thiruvilangam P."/>
            <person name="Wilson R."/>
        </authorList>
    </citation>
    <scope>NUCLEOTIDE SEQUENCE [LARGE SCALE GENOMIC DNA]</scope>
    <source>
        <strain>ATCC BAA-731 / CDC346-86 / RSK2980</strain>
    </source>
</reference>
<feature type="chain" id="PRO_1000081533" description="UPF0181 protein YoaH">
    <location>
        <begin position="1"/>
        <end position="59"/>
    </location>
</feature>
<keyword id="KW-1185">Reference proteome</keyword>
<comment type="similarity">
    <text evidence="1">Belongs to the UPF0181 family.</text>
</comment>
<name>YOAH_SALAR</name>
<accession>A9MNJ9</accession>
<organism>
    <name type="scientific">Salmonella arizonae (strain ATCC BAA-731 / CDC346-86 / RSK2980)</name>
    <dbReference type="NCBI Taxonomy" id="41514"/>
    <lineage>
        <taxon>Bacteria</taxon>
        <taxon>Pseudomonadati</taxon>
        <taxon>Pseudomonadota</taxon>
        <taxon>Gammaproteobacteria</taxon>
        <taxon>Enterobacterales</taxon>
        <taxon>Enterobacteriaceae</taxon>
        <taxon>Salmonella</taxon>
    </lineage>
</organism>
<gene>
    <name evidence="1" type="primary">yoaH</name>
    <name type="ordered locus">SARI_01116</name>
</gene>
<protein>
    <recommendedName>
        <fullName evidence="1">UPF0181 protein YoaH</fullName>
    </recommendedName>
</protein>
<proteinExistence type="inferred from homology"/>